<sequence length="376" mass="41036">MAKRDYYEVLGVSKSASADEIKKAYRKLSKQYHPDINKEAGADEKFKEISEAYEALSDPQKRAQYDQYGHVDPNQGFGGGAGGGFSGGGFSGFEDIFDTFFGGGGRQQDPNAPRQGSDLQYTMRLKFKEAIFGKDAEIEIPREENCDTCHGSGAKPGTTPEKCSHCGGKGSINVEQNTPFGRVVNKRTCQYCNGTGKEIKEKCPTCHGKGRVTKTKKIKVKVPAGVNDGQQMRVSGEGEAGINGGPNGDLYVVFVVIPDEFFEREADDIYVEVPITFVQATLGDEIDVPTVHGKVRLKIPSGTQTGTTFRLRGKGVPHLRGNGTGDQHVIVKVIVPKKLDDKQKEILREFASTTGDKVDEQTSGFFDKMKRAFKGD</sequence>
<comment type="function">
    <text evidence="1">Participates actively in the response to hyperosmotic and heat shock by preventing the aggregation of stress-denatured proteins and by disaggregating proteins, also in an autonomous, DnaK-independent fashion. Unfolded proteins bind initially to DnaJ; upon interaction with the DnaJ-bound protein, DnaK hydrolyzes its bound ATP, resulting in the formation of a stable complex. GrpE releases ADP from DnaK; ATP binding to DnaK triggers the release of the substrate protein, thus completing the reaction cycle. Several rounds of ATP-dependent interactions between DnaJ, DnaK and GrpE are required for fully efficient folding. Also involved, together with DnaK and GrpE, in the DNA replication of plasmids through activation of initiation proteins.</text>
</comment>
<comment type="cofactor">
    <cofactor evidence="1">
        <name>Zn(2+)</name>
        <dbReference type="ChEBI" id="CHEBI:29105"/>
    </cofactor>
    <text evidence="1">Binds 2 Zn(2+) ions per monomer.</text>
</comment>
<comment type="subunit">
    <text evidence="1">Homodimer.</text>
</comment>
<comment type="subcellular location">
    <subcellularLocation>
        <location evidence="1">Cytoplasm</location>
    </subcellularLocation>
</comment>
<comment type="domain">
    <text evidence="1">The J domain is necessary and sufficient to stimulate DnaK ATPase activity. Zinc center 1 plays an important role in the autonomous, DnaK-independent chaperone activity of DnaJ. Zinc center 2 is essential for interaction with DnaK and for DnaJ activity.</text>
</comment>
<comment type="similarity">
    <text evidence="1">Belongs to the DnaJ family.</text>
</comment>
<evidence type="ECO:0000255" key="1">
    <source>
        <dbReference type="HAMAP-Rule" id="MF_01152"/>
    </source>
</evidence>
<name>DNAJ_LISMC</name>
<reference key="1">
    <citation type="journal article" date="2012" name="BMC Genomics">
        <title>Comparative genomics and transcriptomics of lineages I, II, and III strains of Listeria monocytogenes.</title>
        <authorList>
            <person name="Hain T."/>
            <person name="Ghai R."/>
            <person name="Billion A."/>
            <person name="Kuenne C.T."/>
            <person name="Steinweg C."/>
            <person name="Izar B."/>
            <person name="Mohamed W."/>
            <person name="Mraheil M."/>
            <person name="Domann E."/>
            <person name="Schaffrath S."/>
            <person name="Karst U."/>
            <person name="Goesmann A."/>
            <person name="Oehm S."/>
            <person name="Puhler A."/>
            <person name="Merkl R."/>
            <person name="Vorwerk S."/>
            <person name="Glaser P."/>
            <person name="Garrido P."/>
            <person name="Rusniok C."/>
            <person name="Buchrieser C."/>
            <person name="Goebel W."/>
            <person name="Chakraborty T."/>
        </authorList>
    </citation>
    <scope>NUCLEOTIDE SEQUENCE [LARGE SCALE GENOMIC DNA]</scope>
    <source>
        <strain>CLIP80459</strain>
    </source>
</reference>
<gene>
    <name evidence="1" type="primary">dnaJ</name>
    <name type="ordered locus">Lm4b_01482</name>
</gene>
<accession>C1KVB9</accession>
<proteinExistence type="inferred from homology"/>
<dbReference type="EMBL" id="FM242711">
    <property type="protein sequence ID" value="CAS05244.1"/>
    <property type="molecule type" value="Genomic_DNA"/>
</dbReference>
<dbReference type="RefSeq" id="WP_003726022.1">
    <property type="nucleotide sequence ID" value="NC_012488.1"/>
</dbReference>
<dbReference type="SMR" id="C1KVB9"/>
<dbReference type="KEGG" id="lmc:Lm4b_01482"/>
<dbReference type="HOGENOM" id="CLU_017633_0_7_9"/>
<dbReference type="GO" id="GO:0005737">
    <property type="term" value="C:cytoplasm"/>
    <property type="evidence" value="ECO:0007669"/>
    <property type="project" value="UniProtKB-SubCell"/>
</dbReference>
<dbReference type="GO" id="GO:0005524">
    <property type="term" value="F:ATP binding"/>
    <property type="evidence" value="ECO:0007669"/>
    <property type="project" value="InterPro"/>
</dbReference>
<dbReference type="GO" id="GO:0031072">
    <property type="term" value="F:heat shock protein binding"/>
    <property type="evidence" value="ECO:0007669"/>
    <property type="project" value="InterPro"/>
</dbReference>
<dbReference type="GO" id="GO:0051082">
    <property type="term" value="F:unfolded protein binding"/>
    <property type="evidence" value="ECO:0007669"/>
    <property type="project" value="UniProtKB-UniRule"/>
</dbReference>
<dbReference type="GO" id="GO:0008270">
    <property type="term" value="F:zinc ion binding"/>
    <property type="evidence" value="ECO:0007669"/>
    <property type="project" value="UniProtKB-UniRule"/>
</dbReference>
<dbReference type="GO" id="GO:0051085">
    <property type="term" value="P:chaperone cofactor-dependent protein refolding"/>
    <property type="evidence" value="ECO:0007669"/>
    <property type="project" value="TreeGrafter"/>
</dbReference>
<dbReference type="GO" id="GO:0006260">
    <property type="term" value="P:DNA replication"/>
    <property type="evidence" value="ECO:0007669"/>
    <property type="project" value="UniProtKB-KW"/>
</dbReference>
<dbReference type="GO" id="GO:0042026">
    <property type="term" value="P:protein refolding"/>
    <property type="evidence" value="ECO:0007669"/>
    <property type="project" value="TreeGrafter"/>
</dbReference>
<dbReference type="GO" id="GO:0009408">
    <property type="term" value="P:response to heat"/>
    <property type="evidence" value="ECO:0007669"/>
    <property type="project" value="InterPro"/>
</dbReference>
<dbReference type="CDD" id="cd06257">
    <property type="entry name" value="DnaJ"/>
    <property type="match status" value="1"/>
</dbReference>
<dbReference type="CDD" id="cd10747">
    <property type="entry name" value="DnaJ_C"/>
    <property type="match status" value="1"/>
</dbReference>
<dbReference type="CDD" id="cd10719">
    <property type="entry name" value="DnaJ_zf"/>
    <property type="match status" value="1"/>
</dbReference>
<dbReference type="FunFam" id="1.10.287.110:FF:000031">
    <property type="entry name" value="Molecular chaperone DnaJ"/>
    <property type="match status" value="1"/>
</dbReference>
<dbReference type="FunFam" id="2.10.230.10:FF:000002">
    <property type="entry name" value="Molecular chaperone DnaJ"/>
    <property type="match status" value="1"/>
</dbReference>
<dbReference type="FunFam" id="2.60.260.20:FF:000004">
    <property type="entry name" value="Molecular chaperone DnaJ"/>
    <property type="match status" value="1"/>
</dbReference>
<dbReference type="FunFam" id="2.60.260.20:FF:000009">
    <property type="entry name" value="Putative Mitochondrial DnaJ chaperone"/>
    <property type="match status" value="1"/>
</dbReference>
<dbReference type="Gene3D" id="6.20.20.10">
    <property type="match status" value="2"/>
</dbReference>
<dbReference type="Gene3D" id="1.10.287.110">
    <property type="entry name" value="DnaJ domain"/>
    <property type="match status" value="1"/>
</dbReference>
<dbReference type="Gene3D" id="2.60.260.20">
    <property type="entry name" value="Urease metallochaperone UreE, N-terminal domain"/>
    <property type="match status" value="2"/>
</dbReference>
<dbReference type="HAMAP" id="MF_01152">
    <property type="entry name" value="DnaJ"/>
    <property type="match status" value="1"/>
</dbReference>
<dbReference type="InterPro" id="IPR012724">
    <property type="entry name" value="DnaJ"/>
</dbReference>
<dbReference type="InterPro" id="IPR002939">
    <property type="entry name" value="DnaJ_C"/>
</dbReference>
<dbReference type="InterPro" id="IPR001623">
    <property type="entry name" value="DnaJ_domain"/>
</dbReference>
<dbReference type="InterPro" id="IPR018253">
    <property type="entry name" value="DnaJ_domain_CS"/>
</dbReference>
<dbReference type="InterPro" id="IPR008971">
    <property type="entry name" value="HSP40/DnaJ_pept-bd"/>
</dbReference>
<dbReference type="InterPro" id="IPR001305">
    <property type="entry name" value="HSP_DnaJ_Cys-rich_dom"/>
</dbReference>
<dbReference type="InterPro" id="IPR036410">
    <property type="entry name" value="HSP_DnaJ_Cys-rich_dom_sf"/>
</dbReference>
<dbReference type="InterPro" id="IPR036869">
    <property type="entry name" value="J_dom_sf"/>
</dbReference>
<dbReference type="NCBIfam" id="TIGR02349">
    <property type="entry name" value="DnaJ_bact"/>
    <property type="match status" value="1"/>
</dbReference>
<dbReference type="NCBIfam" id="NF008035">
    <property type="entry name" value="PRK10767.1"/>
    <property type="match status" value="1"/>
</dbReference>
<dbReference type="NCBIfam" id="NF010869">
    <property type="entry name" value="PRK14276.1"/>
    <property type="match status" value="1"/>
</dbReference>
<dbReference type="NCBIfam" id="NF010873">
    <property type="entry name" value="PRK14280.1"/>
    <property type="match status" value="1"/>
</dbReference>
<dbReference type="PANTHER" id="PTHR43096:SF48">
    <property type="entry name" value="CHAPERONE PROTEIN DNAJ"/>
    <property type="match status" value="1"/>
</dbReference>
<dbReference type="PANTHER" id="PTHR43096">
    <property type="entry name" value="DNAJ HOMOLOG 1, MITOCHONDRIAL-RELATED"/>
    <property type="match status" value="1"/>
</dbReference>
<dbReference type="Pfam" id="PF00226">
    <property type="entry name" value="DnaJ"/>
    <property type="match status" value="1"/>
</dbReference>
<dbReference type="Pfam" id="PF01556">
    <property type="entry name" value="DnaJ_C"/>
    <property type="match status" value="1"/>
</dbReference>
<dbReference type="Pfam" id="PF00684">
    <property type="entry name" value="DnaJ_CXXCXGXG"/>
    <property type="match status" value="1"/>
</dbReference>
<dbReference type="PRINTS" id="PR00625">
    <property type="entry name" value="JDOMAIN"/>
</dbReference>
<dbReference type="SMART" id="SM00271">
    <property type="entry name" value="DnaJ"/>
    <property type="match status" value="1"/>
</dbReference>
<dbReference type="SUPFAM" id="SSF46565">
    <property type="entry name" value="Chaperone J-domain"/>
    <property type="match status" value="1"/>
</dbReference>
<dbReference type="SUPFAM" id="SSF57938">
    <property type="entry name" value="DnaJ/Hsp40 cysteine-rich domain"/>
    <property type="match status" value="1"/>
</dbReference>
<dbReference type="SUPFAM" id="SSF49493">
    <property type="entry name" value="HSP40/DnaJ peptide-binding domain"/>
    <property type="match status" value="2"/>
</dbReference>
<dbReference type="PROSITE" id="PS00636">
    <property type="entry name" value="DNAJ_1"/>
    <property type="match status" value="1"/>
</dbReference>
<dbReference type="PROSITE" id="PS50076">
    <property type="entry name" value="DNAJ_2"/>
    <property type="match status" value="1"/>
</dbReference>
<dbReference type="PROSITE" id="PS51188">
    <property type="entry name" value="ZF_CR"/>
    <property type="match status" value="1"/>
</dbReference>
<keyword id="KW-0143">Chaperone</keyword>
<keyword id="KW-0963">Cytoplasm</keyword>
<keyword id="KW-0235">DNA replication</keyword>
<keyword id="KW-0479">Metal-binding</keyword>
<keyword id="KW-0677">Repeat</keyword>
<keyword id="KW-0346">Stress response</keyword>
<keyword id="KW-0862">Zinc</keyword>
<keyword id="KW-0863">Zinc-finger</keyword>
<organism>
    <name type="scientific">Listeria monocytogenes serotype 4b (strain CLIP80459)</name>
    <dbReference type="NCBI Taxonomy" id="568819"/>
    <lineage>
        <taxon>Bacteria</taxon>
        <taxon>Bacillati</taxon>
        <taxon>Bacillota</taxon>
        <taxon>Bacilli</taxon>
        <taxon>Bacillales</taxon>
        <taxon>Listeriaceae</taxon>
        <taxon>Listeria</taxon>
    </lineage>
</organism>
<protein>
    <recommendedName>
        <fullName evidence="1">Chaperone protein DnaJ</fullName>
    </recommendedName>
</protein>
<feature type="chain" id="PRO_1000213687" description="Chaperone protein DnaJ">
    <location>
        <begin position="1"/>
        <end position="376"/>
    </location>
</feature>
<feature type="domain" description="J" evidence="1">
    <location>
        <begin position="5"/>
        <end position="69"/>
    </location>
</feature>
<feature type="repeat" description="CXXCXGXG motif">
    <location>
        <begin position="146"/>
        <end position="153"/>
    </location>
</feature>
<feature type="repeat" description="CXXCXGXG motif">
    <location>
        <begin position="163"/>
        <end position="170"/>
    </location>
</feature>
<feature type="repeat" description="CXXCXGXG motif">
    <location>
        <begin position="189"/>
        <end position="196"/>
    </location>
</feature>
<feature type="repeat" description="CXXCXGXG motif">
    <location>
        <begin position="203"/>
        <end position="210"/>
    </location>
</feature>
<feature type="zinc finger region" description="CR-type" evidence="1">
    <location>
        <begin position="133"/>
        <end position="215"/>
    </location>
</feature>
<feature type="binding site" evidence="1">
    <location>
        <position position="146"/>
    </location>
    <ligand>
        <name>Zn(2+)</name>
        <dbReference type="ChEBI" id="CHEBI:29105"/>
        <label>1</label>
    </ligand>
</feature>
<feature type="binding site" evidence="1">
    <location>
        <position position="149"/>
    </location>
    <ligand>
        <name>Zn(2+)</name>
        <dbReference type="ChEBI" id="CHEBI:29105"/>
        <label>1</label>
    </ligand>
</feature>
<feature type="binding site" evidence="1">
    <location>
        <position position="163"/>
    </location>
    <ligand>
        <name>Zn(2+)</name>
        <dbReference type="ChEBI" id="CHEBI:29105"/>
        <label>2</label>
    </ligand>
</feature>
<feature type="binding site" evidence="1">
    <location>
        <position position="166"/>
    </location>
    <ligand>
        <name>Zn(2+)</name>
        <dbReference type="ChEBI" id="CHEBI:29105"/>
        <label>2</label>
    </ligand>
</feature>
<feature type="binding site" evidence="1">
    <location>
        <position position="189"/>
    </location>
    <ligand>
        <name>Zn(2+)</name>
        <dbReference type="ChEBI" id="CHEBI:29105"/>
        <label>2</label>
    </ligand>
</feature>
<feature type="binding site" evidence="1">
    <location>
        <position position="192"/>
    </location>
    <ligand>
        <name>Zn(2+)</name>
        <dbReference type="ChEBI" id="CHEBI:29105"/>
        <label>2</label>
    </ligand>
</feature>
<feature type="binding site" evidence="1">
    <location>
        <position position="203"/>
    </location>
    <ligand>
        <name>Zn(2+)</name>
        <dbReference type="ChEBI" id="CHEBI:29105"/>
        <label>1</label>
    </ligand>
</feature>
<feature type="binding site" evidence="1">
    <location>
        <position position="206"/>
    </location>
    <ligand>
        <name>Zn(2+)</name>
        <dbReference type="ChEBI" id="CHEBI:29105"/>
        <label>1</label>
    </ligand>
</feature>